<feature type="chain" id="PRO_0000263795" description="Translation initiation factor IF-1">
    <location>
        <begin position="1"/>
        <end position="80"/>
    </location>
</feature>
<feature type="domain" description="S1-like" evidence="1">
    <location>
        <begin position="6"/>
        <end position="80"/>
    </location>
</feature>
<sequence>MPEQREKRKKEESDVVRAEGVVEEALPNTTFRVKLDSGHDILAYISGKMRIHYIRILPGDRVVLEISPYDTSRGRIVYRK</sequence>
<protein>
    <recommendedName>
        <fullName evidence="1">Translation initiation factor IF-1</fullName>
    </recommendedName>
</protein>
<evidence type="ECO:0000255" key="1">
    <source>
        <dbReference type="HAMAP-Rule" id="MF_00075"/>
    </source>
</evidence>
<evidence type="ECO:0000305" key="2"/>
<name>IF1_DEIGD</name>
<gene>
    <name evidence="1" type="primary">infA</name>
    <name type="ordered locus">Dgeo_1845</name>
</gene>
<dbReference type="EMBL" id="CP000359">
    <property type="protein sequence ID" value="ABF46140.1"/>
    <property type="status" value="ALT_INIT"/>
    <property type="molecule type" value="Genomic_DNA"/>
</dbReference>
<dbReference type="RefSeq" id="WP_034386993.1">
    <property type="nucleotide sequence ID" value="NC_008025.1"/>
</dbReference>
<dbReference type="SMR" id="Q1IX94"/>
<dbReference type="STRING" id="319795.Dgeo_1845"/>
<dbReference type="KEGG" id="dge:Dgeo_1845"/>
<dbReference type="eggNOG" id="COG0361">
    <property type="taxonomic scope" value="Bacteria"/>
</dbReference>
<dbReference type="HOGENOM" id="CLU_151267_0_2_0"/>
<dbReference type="Proteomes" id="UP000002431">
    <property type="component" value="Chromosome"/>
</dbReference>
<dbReference type="GO" id="GO:0005829">
    <property type="term" value="C:cytosol"/>
    <property type="evidence" value="ECO:0007669"/>
    <property type="project" value="TreeGrafter"/>
</dbReference>
<dbReference type="GO" id="GO:0043022">
    <property type="term" value="F:ribosome binding"/>
    <property type="evidence" value="ECO:0007669"/>
    <property type="project" value="UniProtKB-UniRule"/>
</dbReference>
<dbReference type="GO" id="GO:0019843">
    <property type="term" value="F:rRNA binding"/>
    <property type="evidence" value="ECO:0007669"/>
    <property type="project" value="UniProtKB-UniRule"/>
</dbReference>
<dbReference type="GO" id="GO:0003743">
    <property type="term" value="F:translation initiation factor activity"/>
    <property type="evidence" value="ECO:0007669"/>
    <property type="project" value="UniProtKB-UniRule"/>
</dbReference>
<dbReference type="CDD" id="cd04451">
    <property type="entry name" value="S1_IF1"/>
    <property type="match status" value="1"/>
</dbReference>
<dbReference type="FunFam" id="2.40.50.140:FF:000002">
    <property type="entry name" value="Translation initiation factor IF-1"/>
    <property type="match status" value="1"/>
</dbReference>
<dbReference type="Gene3D" id="2.40.50.140">
    <property type="entry name" value="Nucleic acid-binding proteins"/>
    <property type="match status" value="1"/>
</dbReference>
<dbReference type="HAMAP" id="MF_00075">
    <property type="entry name" value="IF_1"/>
    <property type="match status" value="1"/>
</dbReference>
<dbReference type="InterPro" id="IPR012340">
    <property type="entry name" value="NA-bd_OB-fold"/>
</dbReference>
<dbReference type="InterPro" id="IPR006196">
    <property type="entry name" value="RNA-binding_domain_S1_IF1"/>
</dbReference>
<dbReference type="InterPro" id="IPR004368">
    <property type="entry name" value="TIF_IF1"/>
</dbReference>
<dbReference type="NCBIfam" id="TIGR00008">
    <property type="entry name" value="infA"/>
    <property type="match status" value="1"/>
</dbReference>
<dbReference type="PANTHER" id="PTHR33370">
    <property type="entry name" value="TRANSLATION INITIATION FACTOR IF-1, CHLOROPLASTIC"/>
    <property type="match status" value="1"/>
</dbReference>
<dbReference type="PANTHER" id="PTHR33370:SF1">
    <property type="entry name" value="TRANSLATION INITIATION FACTOR IF-1, CHLOROPLASTIC"/>
    <property type="match status" value="1"/>
</dbReference>
<dbReference type="Pfam" id="PF01176">
    <property type="entry name" value="eIF-1a"/>
    <property type="match status" value="1"/>
</dbReference>
<dbReference type="SUPFAM" id="SSF50249">
    <property type="entry name" value="Nucleic acid-binding proteins"/>
    <property type="match status" value="1"/>
</dbReference>
<dbReference type="PROSITE" id="PS50832">
    <property type="entry name" value="S1_IF1_TYPE"/>
    <property type="match status" value="1"/>
</dbReference>
<keyword id="KW-0963">Cytoplasm</keyword>
<keyword id="KW-0396">Initiation factor</keyword>
<keyword id="KW-0648">Protein biosynthesis</keyword>
<keyword id="KW-0694">RNA-binding</keyword>
<keyword id="KW-0699">rRNA-binding</keyword>
<organism>
    <name type="scientific">Deinococcus geothermalis (strain DSM 11300 / CIP 105573 / AG-3a)</name>
    <dbReference type="NCBI Taxonomy" id="319795"/>
    <lineage>
        <taxon>Bacteria</taxon>
        <taxon>Thermotogati</taxon>
        <taxon>Deinococcota</taxon>
        <taxon>Deinococci</taxon>
        <taxon>Deinococcales</taxon>
        <taxon>Deinococcaceae</taxon>
        <taxon>Deinococcus</taxon>
    </lineage>
</organism>
<proteinExistence type="inferred from homology"/>
<accession>Q1IX94</accession>
<reference key="1">
    <citation type="submission" date="2006-04" db="EMBL/GenBank/DDBJ databases">
        <title>Complete sequence of chromosome of Deinococcus geothermalis DSM 11300.</title>
        <authorList>
            <person name="Copeland A."/>
            <person name="Lucas S."/>
            <person name="Lapidus A."/>
            <person name="Barry K."/>
            <person name="Detter J.C."/>
            <person name="Glavina del Rio T."/>
            <person name="Hammon N."/>
            <person name="Israni S."/>
            <person name="Dalin E."/>
            <person name="Tice H."/>
            <person name="Pitluck S."/>
            <person name="Brettin T."/>
            <person name="Bruce D."/>
            <person name="Han C."/>
            <person name="Tapia R."/>
            <person name="Saunders E."/>
            <person name="Gilna P."/>
            <person name="Schmutz J."/>
            <person name="Larimer F."/>
            <person name="Land M."/>
            <person name="Hauser L."/>
            <person name="Kyrpides N."/>
            <person name="Kim E."/>
            <person name="Daly M.J."/>
            <person name="Fredrickson J.K."/>
            <person name="Makarova K.S."/>
            <person name="Gaidamakova E.K."/>
            <person name="Zhai M."/>
            <person name="Richardson P."/>
        </authorList>
    </citation>
    <scope>NUCLEOTIDE SEQUENCE [LARGE SCALE GENOMIC DNA]</scope>
    <source>
        <strain>DSM 11300 / CIP 105573 / AG-3a</strain>
    </source>
</reference>
<comment type="function">
    <text evidence="1">One of the essential components for the initiation of protein synthesis. Stabilizes the binding of IF-2 and IF-3 on the 30S subunit to which N-formylmethionyl-tRNA(fMet) subsequently binds. Helps modulate mRNA selection, yielding the 30S pre-initiation complex (PIC). Upon addition of the 50S ribosomal subunit IF-1, IF-2 and IF-3 are released leaving the mature 70S translation initiation complex.</text>
</comment>
<comment type="subunit">
    <text evidence="1">Component of the 30S ribosomal translation pre-initiation complex which assembles on the 30S ribosome in the order IF-2 and IF-3, IF-1 and N-formylmethionyl-tRNA(fMet); mRNA recruitment can occur at any time during PIC assembly.</text>
</comment>
<comment type="subcellular location">
    <subcellularLocation>
        <location evidence="1">Cytoplasm</location>
    </subcellularLocation>
</comment>
<comment type="similarity">
    <text evidence="1">Belongs to the IF-1 family.</text>
</comment>
<comment type="sequence caution" evidence="2">
    <conflict type="erroneous initiation">
        <sequence resource="EMBL-CDS" id="ABF46140"/>
    </conflict>
    <text>Extended N-terminus.</text>
</comment>